<feature type="chain" id="PRO_0000411012" description="Vacuolar iron transporter homolog 1">
    <location>
        <begin position="1"/>
        <end position="232"/>
    </location>
</feature>
<feature type="topological domain" description="Cytoplasmic" evidence="3">
    <location>
        <begin position="1"/>
        <end position="59"/>
    </location>
</feature>
<feature type="transmembrane region" description="Helical" evidence="3">
    <location>
        <begin position="60"/>
        <end position="80"/>
    </location>
</feature>
<feature type="topological domain" description="Vacuolar" evidence="3">
    <location>
        <begin position="81"/>
        <end position="89"/>
    </location>
</feature>
<feature type="transmembrane region" description="Helical" evidence="3">
    <location>
        <begin position="90"/>
        <end position="110"/>
    </location>
</feature>
<feature type="topological domain" description="Cytoplasmic" evidence="3">
    <location>
        <begin position="111"/>
        <end position="148"/>
    </location>
</feature>
<feature type="transmembrane region" description="Helical" evidence="3">
    <location>
        <begin position="149"/>
        <end position="169"/>
    </location>
</feature>
<feature type="topological domain" description="Vacuolar" evidence="3">
    <location>
        <begin position="170"/>
        <end position="175"/>
    </location>
</feature>
<feature type="transmembrane region" description="Helical" evidence="3">
    <location>
        <begin position="176"/>
        <end position="196"/>
    </location>
</feature>
<feature type="topological domain" description="Cytoplasmic" evidence="3">
    <location>
        <begin position="197"/>
        <end position="208"/>
    </location>
</feature>
<feature type="transmembrane region" description="Helical" evidence="3">
    <location>
        <begin position="209"/>
        <end position="229"/>
    </location>
</feature>
<feature type="topological domain" description="Vacuolar" evidence="3">
    <location>
        <begin position="230"/>
        <end position="232"/>
    </location>
</feature>
<feature type="sequence conflict" description="In Ref. 4; AK111133." evidence="4" ref="4">
    <original>A</original>
    <variation>V</variation>
    <location>
        <position position="177"/>
    </location>
</feature>
<accession>Q6H658</accession>
<accession>Q0DZ60</accession>
<name>VITH1_ORYSJ</name>
<sequence length="232" mass="22876">MAIDLGCHVGCASPETKQEETADPTAAPVVVDDVEAAAGGRRPGDGGGVNYVARAQWLRAAVLGANDGLVSVASLMVGVGAANGTRRAMLVSGLAGLVAGACSMAIGEFVSVYAQCDIQAAQIERARGGKDADGGEEEEELPSPTMAAVASALSFAAGAALPLLAGGFVRPWAARVAAVCAASSLGLAGFGVASAYLGGAGVARSGVRMLVGGWLAMAVTYGVLKLFGMHGV</sequence>
<keyword id="KW-0406">Ion transport</keyword>
<keyword id="KW-0408">Iron</keyword>
<keyword id="KW-0410">Iron transport</keyword>
<keyword id="KW-0472">Membrane</keyword>
<keyword id="KW-1185">Reference proteome</keyword>
<keyword id="KW-0812">Transmembrane</keyword>
<keyword id="KW-1133">Transmembrane helix</keyword>
<keyword id="KW-0813">Transport</keyword>
<keyword id="KW-0926">Vacuole</keyword>
<organism>
    <name type="scientific">Oryza sativa subsp. japonica</name>
    <name type="common">Rice</name>
    <dbReference type="NCBI Taxonomy" id="39947"/>
    <lineage>
        <taxon>Eukaryota</taxon>
        <taxon>Viridiplantae</taxon>
        <taxon>Streptophyta</taxon>
        <taxon>Embryophyta</taxon>
        <taxon>Tracheophyta</taxon>
        <taxon>Spermatophyta</taxon>
        <taxon>Magnoliopsida</taxon>
        <taxon>Liliopsida</taxon>
        <taxon>Poales</taxon>
        <taxon>Poaceae</taxon>
        <taxon>BOP clade</taxon>
        <taxon>Oryzoideae</taxon>
        <taxon>Oryzeae</taxon>
        <taxon>Oryzinae</taxon>
        <taxon>Oryza</taxon>
        <taxon>Oryza sativa</taxon>
    </lineage>
</organism>
<reference key="1">
    <citation type="journal article" date="2005" name="Nature">
        <title>The map-based sequence of the rice genome.</title>
        <authorList>
            <consortium name="International rice genome sequencing project (IRGSP)"/>
        </authorList>
    </citation>
    <scope>NUCLEOTIDE SEQUENCE [LARGE SCALE GENOMIC DNA]</scope>
    <source>
        <strain>cv. Nipponbare</strain>
    </source>
</reference>
<reference key="2">
    <citation type="journal article" date="2008" name="Nucleic Acids Res.">
        <title>The rice annotation project database (RAP-DB): 2008 update.</title>
        <authorList>
            <consortium name="The rice annotation project (RAP)"/>
        </authorList>
    </citation>
    <scope>GENOME REANNOTATION</scope>
    <source>
        <strain>cv. Nipponbare</strain>
    </source>
</reference>
<reference key="3">
    <citation type="journal article" date="2013" name="Rice">
        <title>Improvement of the Oryza sativa Nipponbare reference genome using next generation sequence and optical map data.</title>
        <authorList>
            <person name="Kawahara Y."/>
            <person name="de la Bastide M."/>
            <person name="Hamilton J.P."/>
            <person name="Kanamori H."/>
            <person name="McCombie W.R."/>
            <person name="Ouyang S."/>
            <person name="Schwartz D.C."/>
            <person name="Tanaka T."/>
            <person name="Wu J."/>
            <person name="Zhou S."/>
            <person name="Childs K.L."/>
            <person name="Davidson R.M."/>
            <person name="Lin H."/>
            <person name="Quesada-Ocampo L."/>
            <person name="Vaillancourt B."/>
            <person name="Sakai H."/>
            <person name="Lee S.S."/>
            <person name="Kim J."/>
            <person name="Numa H."/>
            <person name="Itoh T."/>
            <person name="Buell C.R."/>
            <person name="Matsumoto T."/>
        </authorList>
    </citation>
    <scope>GENOME REANNOTATION</scope>
    <source>
        <strain>cv. Nipponbare</strain>
    </source>
</reference>
<reference key="4">
    <citation type="journal article" date="2003" name="Science">
        <title>Collection, mapping, and annotation of over 28,000 cDNA clones from japonica rice.</title>
        <authorList>
            <consortium name="The rice full-length cDNA consortium"/>
        </authorList>
    </citation>
    <scope>NUCLEOTIDE SEQUENCE [LARGE SCALE MRNA] OF 105-232</scope>
    <source>
        <strain>cv. Nipponbare</strain>
    </source>
</reference>
<gene>
    <name type="ordered locus">Os02g0644200</name>
    <name type="ordered locus">LOC_Os02g43030</name>
    <name type="ORF">OJ1282_H11.20</name>
</gene>
<dbReference type="EMBL" id="AP005291">
    <property type="protein sequence ID" value="BAD25791.1"/>
    <property type="molecule type" value="Genomic_DNA"/>
</dbReference>
<dbReference type="EMBL" id="AP008208">
    <property type="protein sequence ID" value="BAF09478.1"/>
    <property type="status" value="ALT_INIT"/>
    <property type="molecule type" value="Genomic_DNA"/>
</dbReference>
<dbReference type="EMBL" id="AP014958">
    <property type="status" value="NOT_ANNOTATED_CDS"/>
    <property type="molecule type" value="Genomic_DNA"/>
</dbReference>
<dbReference type="EMBL" id="AK111133">
    <property type="status" value="NOT_ANNOTATED_CDS"/>
    <property type="molecule type" value="mRNA"/>
</dbReference>
<dbReference type="RefSeq" id="XP_015625034.1">
    <property type="nucleotide sequence ID" value="XM_015769548.1"/>
</dbReference>
<dbReference type="SMR" id="Q6H658"/>
<dbReference type="FunCoup" id="Q6H658">
    <property type="interactions" value="3"/>
</dbReference>
<dbReference type="STRING" id="39947.Q6H658"/>
<dbReference type="PaxDb" id="39947-Q6H658"/>
<dbReference type="KEGG" id="dosa:Os02g0644200"/>
<dbReference type="eggNOG" id="KOG4473">
    <property type="taxonomic scope" value="Eukaryota"/>
</dbReference>
<dbReference type="InParanoid" id="Q6H658"/>
<dbReference type="OrthoDB" id="73465at2759"/>
<dbReference type="Proteomes" id="UP000000763">
    <property type="component" value="Chromosome 2"/>
</dbReference>
<dbReference type="Proteomes" id="UP000059680">
    <property type="component" value="Chromosome 2"/>
</dbReference>
<dbReference type="GO" id="GO:0016020">
    <property type="term" value="C:membrane"/>
    <property type="evidence" value="ECO:0000318"/>
    <property type="project" value="GO_Central"/>
</dbReference>
<dbReference type="GO" id="GO:0005774">
    <property type="term" value="C:vacuolar membrane"/>
    <property type="evidence" value="ECO:0007669"/>
    <property type="project" value="UniProtKB-SubCell"/>
</dbReference>
<dbReference type="GO" id="GO:0005381">
    <property type="term" value="F:iron ion transmembrane transporter activity"/>
    <property type="evidence" value="ECO:0000318"/>
    <property type="project" value="GO_Central"/>
</dbReference>
<dbReference type="GO" id="GO:0005384">
    <property type="term" value="F:manganese ion transmembrane transporter activity"/>
    <property type="evidence" value="ECO:0000318"/>
    <property type="project" value="GO_Central"/>
</dbReference>
<dbReference type="GO" id="GO:0030026">
    <property type="term" value="P:intracellular manganese ion homeostasis"/>
    <property type="evidence" value="ECO:0000318"/>
    <property type="project" value="GO_Central"/>
</dbReference>
<dbReference type="InterPro" id="IPR008217">
    <property type="entry name" value="Ccc1_fam"/>
</dbReference>
<dbReference type="PANTHER" id="PTHR31851">
    <property type="entry name" value="FE(2+)/MN(2+) TRANSPORTER PCL1"/>
    <property type="match status" value="1"/>
</dbReference>
<dbReference type="Pfam" id="PF01988">
    <property type="entry name" value="VIT1"/>
    <property type="match status" value="2"/>
</dbReference>
<comment type="function">
    <text evidence="1">Probable vacuolar iron transporter that may be involved in the regulation of iron distribution throughout the plant.</text>
</comment>
<comment type="catalytic activity">
    <reaction evidence="2">
        <text>Fe(2+)(in) = Fe(2+)(out)</text>
        <dbReference type="Rhea" id="RHEA:28486"/>
        <dbReference type="ChEBI" id="CHEBI:29033"/>
    </reaction>
    <physiologicalReaction direction="left-to-right" evidence="4">
        <dbReference type="Rhea" id="RHEA:28487"/>
    </physiologicalReaction>
</comment>
<comment type="subcellular location">
    <subcellularLocation>
        <location evidence="4">Vacuole membrane</location>
        <topology evidence="4">Multi-pass membrane protein</topology>
    </subcellularLocation>
</comment>
<comment type="similarity">
    <text evidence="4">Belongs to the CCC1 family.</text>
</comment>
<comment type="sequence caution" evidence="4">
    <conflict type="erroneous initiation">
        <sequence resource="EMBL-CDS" id="BAF09478"/>
    </conflict>
    <text>Truncated N-terminus.</text>
</comment>
<evidence type="ECO:0000250" key="1"/>
<evidence type="ECO:0000250" key="2">
    <source>
        <dbReference type="UniProtKB" id="Q9LPU9"/>
    </source>
</evidence>
<evidence type="ECO:0000255" key="3"/>
<evidence type="ECO:0000305" key="4"/>
<protein>
    <recommendedName>
        <fullName>Vacuolar iron transporter homolog 1</fullName>
    </recommendedName>
    <alternativeName>
        <fullName>Protein NODULIN-LIKE 1</fullName>
    </alternativeName>
</protein>
<proteinExistence type="evidence at transcript level"/>